<protein>
    <recommendedName>
        <fullName evidence="9">Hydrogen cyanide synthase subunit HcnA</fullName>
        <shortName evidence="7">HcnA</shortName>
        <ecNumber evidence="1">1.4.99.5</ecNumber>
    </recommendedName>
    <alternativeName>
        <fullName evidence="7">Glycine dehydrogenase (cyanide-forming)</fullName>
    </alternativeName>
</protein>
<dbReference type="EC" id="1.4.99.5" evidence="1"/>
<dbReference type="EMBL" id="AF053760">
    <property type="protein sequence ID" value="AAC38594.1"/>
    <property type="molecule type" value="Genomic_DNA"/>
</dbReference>
<dbReference type="RefSeq" id="WP_011060873.1">
    <property type="nucleotide sequence ID" value="NZ_LS999205.1"/>
</dbReference>
<dbReference type="SMR" id="O85226"/>
<dbReference type="GeneID" id="57475633"/>
<dbReference type="PATRIC" id="fig|1124983.3.peg.2664"/>
<dbReference type="eggNOG" id="COG3383">
    <property type="taxonomic scope" value="Bacteria"/>
</dbReference>
<dbReference type="BioCyc" id="MetaCyc:MONOMER-8123"/>
<dbReference type="GO" id="GO:0005886">
    <property type="term" value="C:plasma membrane"/>
    <property type="evidence" value="ECO:0007669"/>
    <property type="project" value="UniProtKB-SubCell"/>
</dbReference>
<dbReference type="GO" id="GO:0051537">
    <property type="term" value="F:2 iron, 2 sulfur cluster binding"/>
    <property type="evidence" value="ECO:0007669"/>
    <property type="project" value="UniProtKB-KW"/>
</dbReference>
<dbReference type="GO" id="GO:0050622">
    <property type="term" value="F:glycine dehydrogenase (cyanide-forming) activity"/>
    <property type="evidence" value="ECO:0007669"/>
    <property type="project" value="UniProtKB-EC"/>
</dbReference>
<dbReference type="GO" id="GO:0046872">
    <property type="term" value="F:metal ion binding"/>
    <property type="evidence" value="ECO:0007669"/>
    <property type="project" value="UniProtKB-KW"/>
</dbReference>
<dbReference type="CDD" id="cd00207">
    <property type="entry name" value="fer2"/>
    <property type="match status" value="1"/>
</dbReference>
<dbReference type="Gene3D" id="3.10.20.440">
    <property type="entry name" value="2Fe-2S iron-sulphur cluster binding domain, sarcosine oxidase, alpha subunit, N-terminal domain"/>
    <property type="match status" value="1"/>
</dbReference>
<dbReference type="InterPro" id="IPR042204">
    <property type="entry name" value="2Fe-2S-bd_N"/>
</dbReference>
<dbReference type="InterPro" id="IPR036010">
    <property type="entry name" value="2Fe-2S_ferredoxin-like_sf"/>
</dbReference>
<dbReference type="InterPro" id="IPR001041">
    <property type="entry name" value="2Fe-2S_ferredoxin-type"/>
</dbReference>
<dbReference type="Pfam" id="PF13510">
    <property type="entry name" value="Fer2_4"/>
    <property type="match status" value="1"/>
</dbReference>
<dbReference type="SUPFAM" id="SSF54292">
    <property type="entry name" value="2Fe-2S ferredoxin-like"/>
    <property type="match status" value="1"/>
</dbReference>
<dbReference type="PROSITE" id="PS51085">
    <property type="entry name" value="2FE2S_FER_2"/>
    <property type="match status" value="1"/>
</dbReference>
<feature type="chain" id="PRO_0000419810" description="Hydrogen cyanide synthase subunit HcnA">
    <location>
        <begin position="1"/>
        <end position="105"/>
    </location>
</feature>
<feature type="domain" description="2Fe-2S ferredoxin-type" evidence="2">
    <location>
        <begin position="16"/>
        <end position="97"/>
    </location>
</feature>
<feature type="binding site" evidence="2">
    <location>
        <position position="60"/>
    </location>
    <ligand>
        <name>[2Fe-2S] cluster</name>
        <dbReference type="ChEBI" id="CHEBI:190135"/>
    </ligand>
</feature>
<feature type="binding site" evidence="2">
    <location>
        <position position="65"/>
    </location>
    <ligand>
        <name>[2Fe-2S] cluster</name>
        <dbReference type="ChEBI" id="CHEBI:190135"/>
    </ligand>
</feature>
<feature type="binding site" evidence="2">
    <location>
        <position position="68"/>
    </location>
    <ligand>
        <name>[2Fe-2S] cluster</name>
        <dbReference type="ChEBI" id="CHEBI:190135"/>
    </ligand>
</feature>
<feature type="binding site" evidence="2">
    <location>
        <position position="81"/>
    </location>
    <ligand>
        <name>[2Fe-2S] cluster</name>
        <dbReference type="ChEBI" id="CHEBI:190135"/>
    </ligand>
</feature>
<gene>
    <name evidence="9" type="primary">hcnA</name>
</gene>
<reference evidence="8 9" key="1">
    <citation type="journal article" date="1998" name="J. Bacteriol.">
        <title>Characterization of the hcnABC gene cluster encoding hydrogen cyanide synthase and anaerobic regulation by ANR in the strictly aerobic biocontrol agent Pseudomonas fluorescens CHA0.</title>
        <authorList>
            <person name="Laville J."/>
            <person name="Blumer C."/>
            <person name="Von Schroetter C."/>
            <person name="Gaia V."/>
            <person name="Defago G."/>
            <person name="Keel C."/>
            <person name="Haas D."/>
        </authorList>
    </citation>
    <scope>NUCLEOTIDE SEQUENCE [GENOMIC DNA]</scope>
    <scope>FUNCTION</scope>
    <source>
        <strain>DSM 19095 / LMG 27888 / CFBP 6595 / CHA0</strain>
    </source>
</reference>
<reference evidence="8" key="2">
    <citation type="journal article" date="1989" name="EMBO J.">
        <title>Cyanide production by Pseudomonas fluorescens helps suppress black root rot of tobacco under gnotobiotic conditions.</title>
        <authorList>
            <person name="Voisard C."/>
            <person name="Keel C."/>
            <person name="Haas D."/>
            <person name="Defago G."/>
        </authorList>
    </citation>
    <scope>FUNCTION</scope>
    <scope>INDUCTION</scope>
    <source>
        <strain>DSM 19095 / LMG 27888 / CFBP 6595 / CHA0</strain>
    </source>
</reference>
<reference key="3">
    <citation type="journal article" date="1999" name="Proc. Natl. Acad. Sci. U.S.A.">
        <title>Global GacA-steered control of cyanide and exoprotease production in Pseudomonas fluorescens involves specific ribosome binding sites.</title>
        <authorList>
            <person name="Blumer C."/>
            <person name="Heeb S."/>
            <person name="Pessi G."/>
            <person name="Haas D."/>
        </authorList>
    </citation>
    <scope>INDUCTION</scope>
    <source>
        <strain>DSM 19095 / LMG 27888 / CFBP 6595 / CHA0</strain>
    </source>
</reference>
<reference key="4">
    <citation type="journal article" date="2000" name="Microbiology">
        <title>Iron regulation of the hcnABC genes encoding hydrogen cyanide synthase depends on the anaerobic regulator ANR rather than on the global activator GacA in Pseudomonas fluorescens CHA0.</title>
        <authorList>
            <person name="Blumer C."/>
            <person name="Haas D."/>
        </authorList>
    </citation>
    <scope>INDUCTION</scope>
    <source>
        <strain>DSM 19095 / LMG 27888 / CFBP 6595 / CHA0</strain>
    </source>
</reference>
<name>HCNA_PSEPH</name>
<keyword id="KW-0001">2Fe-2S</keyword>
<keyword id="KW-1003">Cell membrane</keyword>
<keyword id="KW-0408">Iron</keyword>
<keyword id="KW-0411">Iron-sulfur</keyword>
<keyword id="KW-0472">Membrane</keyword>
<keyword id="KW-0479">Metal-binding</keyword>
<keyword id="KW-0560">Oxidoreductase</keyword>
<sequence length="105" mass="11525">MRQIDRNFDIQPLQHADMTISLNGQPVTAALGETVLSVIQATGLRQVARNDHGQLVGAYCGMGVCHCCLVQIDGRHKRRACQTLVKPGMQVQTLSNRITETEPTL</sequence>
<organism>
    <name type="scientific">Pseudomonas protegens (strain DSM 19095 / LMG 27888 / CFBP 6595 / CHA0)</name>
    <dbReference type="NCBI Taxonomy" id="1124983"/>
    <lineage>
        <taxon>Bacteria</taxon>
        <taxon>Pseudomonadati</taxon>
        <taxon>Pseudomonadota</taxon>
        <taxon>Gammaproteobacteria</taxon>
        <taxon>Pseudomonadales</taxon>
        <taxon>Pseudomonadaceae</taxon>
        <taxon>Pseudomonas</taxon>
    </lineage>
</organism>
<comment type="function">
    <text evidence="5 6">A three-component membrane-bound flavoenzyme that catalyzes the formation of hydrogen cyanide, a secondary metabolite, by transfer of electrons to a cyanide-resistant branch of the aerobic respiratory chain. Contributes to suppression of black root rot of tobacco (PubMed:16453871).</text>
</comment>
<comment type="catalytic activity">
    <reaction evidence="1">
        <text>glycine + 2 A = hydrogen cyanide + 2 AH2 + CO2</text>
        <dbReference type="Rhea" id="RHEA:15821"/>
        <dbReference type="ChEBI" id="CHEBI:13193"/>
        <dbReference type="ChEBI" id="CHEBI:16526"/>
        <dbReference type="ChEBI" id="CHEBI:17499"/>
        <dbReference type="ChEBI" id="CHEBI:18407"/>
        <dbReference type="ChEBI" id="CHEBI:57305"/>
        <dbReference type="EC" id="1.4.99.5"/>
    </reaction>
</comment>
<comment type="subunit">
    <text evidence="1">Heterotrimer of HcnA, HcnB and HcnC.</text>
</comment>
<comment type="subcellular location">
    <subcellularLocation>
        <location evidence="1">Cell membrane</location>
    </subcellularLocation>
</comment>
<comment type="induction">
    <text evidence="3 4 5">Transcriptionally up-regulated by Anr in response to Fe(3+) in oxygen-limiting conditions (PubMed:10570200, PubMed:11021918). Post-transcriptionally up-regulated by GacA (PubMed:10570200). Stimulated by glycine.</text>
</comment>
<proteinExistence type="evidence at transcript level"/>
<evidence type="ECO:0000250" key="1">
    <source>
        <dbReference type="UniProtKB" id="G3XD67"/>
    </source>
</evidence>
<evidence type="ECO:0000255" key="2">
    <source>
        <dbReference type="PROSITE-ProRule" id="PRU00465"/>
    </source>
</evidence>
<evidence type="ECO:0000269" key="3">
    <source>
    </source>
</evidence>
<evidence type="ECO:0000269" key="4">
    <source>
    </source>
</evidence>
<evidence type="ECO:0000269" key="5">
    <source>
    </source>
</evidence>
<evidence type="ECO:0000269" key="6">
    <source>
    </source>
</evidence>
<evidence type="ECO:0000303" key="7">
    <source>
    </source>
</evidence>
<evidence type="ECO:0000305" key="8"/>
<evidence type="ECO:0000312" key="9">
    <source>
        <dbReference type="EMBL" id="AAC38594.1"/>
    </source>
</evidence>
<accession>O85226</accession>